<sequence>MSSTTTVAEFAAELNKSPATLIEQLTSAGVAKVQASDPLSESDKQKLLGYLHASHGTVAADRKKITLVKKSTSEIKQADSTGRARIIPVQTIKKRTFIKRDDGSDMPVEEAQPEVLVAPQVQAAADAELVRREDEANRHAELLRRQEAELTEKRRLRDEQAAQEAAREREREAAAQKAQAEAVAQAAAAAQAAALAAEAAKKVKPTIGKIFKPAPVAPTAPAITVEAQKVIDTAAAEKTSKAAEAATAKAAETASLQAAAKAKATAEFQADAAKAVDLQERRRKAEAEAAGIRAMLSAPKRVLVPHVDPKIAMKGTLHKPVVAPGAAKPAVPAAAAPAAPGAAGKKEVKSENLSSTWKDDAAKKKGIPSRGAPVVPGRGNFRAGPRGRRSSGRDVRPESNFVAPTEFKVLEVHVPETITVSELAHKMSIKSSEVIKHLMKLGQMVTINQPLDQDTAMIVVEEMGHTALTAALDDPEAFTADDVQGQQAEALPRAPVVTVMGHVDHGKTSLLDYIRRAKVASGEAGGITQHIGAYHVQTPRGMVSFLDTPGHEAFTAMRARGAQATDIVILVVAADDGVMPQTKEAIKHARAAGVPIVVAINKIDKPGINLERVKGELVTEGVVPEEFGGDSPFVPVSAHTGAGIDDLLEQVLLQAEVLELKASVDSLAKGLVIEARLDKGRGPVATVLVQSGTLKAGDVVLAGSTYGRVRAMLDENGKPIKTAGPSIPVEIQGLTEVPQAGDDFMVMTDERRVREIATYRAGKFRNTKLAKQQASKLENMFSDINAGEVKMLPIIIKADVQGSQEALAQSLLKLSTDEVKVQLVYSGVGGISESDVNLAIASKAVLIGFNTRADAQARKQAENNGIDIRYYNIIYDAVDELKAAMSGMLTPDKKEEIIGNAEIRNIFKVSKIGSIAGCMVTAGVVRRTAKVRLLRGNVVIFTGELDSLKRFKDDAKEVKEGFECGLNLKNYNDIEVGDILEFFEIKEVARTL</sequence>
<keyword id="KW-0963">Cytoplasm</keyword>
<keyword id="KW-0342">GTP-binding</keyword>
<keyword id="KW-0396">Initiation factor</keyword>
<keyword id="KW-0547">Nucleotide-binding</keyword>
<keyword id="KW-0648">Protein biosynthesis</keyword>
<keyword id="KW-1185">Reference proteome</keyword>
<organism>
    <name type="scientific">Polaromonas naphthalenivorans (strain CJ2)</name>
    <dbReference type="NCBI Taxonomy" id="365044"/>
    <lineage>
        <taxon>Bacteria</taxon>
        <taxon>Pseudomonadati</taxon>
        <taxon>Pseudomonadota</taxon>
        <taxon>Betaproteobacteria</taxon>
        <taxon>Burkholderiales</taxon>
        <taxon>Comamonadaceae</taxon>
        <taxon>Polaromonas</taxon>
    </lineage>
</organism>
<dbReference type="EMBL" id="CP000529">
    <property type="protein sequence ID" value="ABM37320.1"/>
    <property type="molecule type" value="Genomic_DNA"/>
</dbReference>
<dbReference type="RefSeq" id="WP_011801400.1">
    <property type="nucleotide sequence ID" value="NC_008781.1"/>
</dbReference>
<dbReference type="SMR" id="A1VNU2"/>
<dbReference type="STRING" id="365044.Pnap_2011"/>
<dbReference type="KEGG" id="pna:Pnap_2011"/>
<dbReference type="eggNOG" id="COG0532">
    <property type="taxonomic scope" value="Bacteria"/>
</dbReference>
<dbReference type="HOGENOM" id="CLU_006301_6_0_4"/>
<dbReference type="OrthoDB" id="9811804at2"/>
<dbReference type="Proteomes" id="UP000000644">
    <property type="component" value="Chromosome"/>
</dbReference>
<dbReference type="GO" id="GO:0005829">
    <property type="term" value="C:cytosol"/>
    <property type="evidence" value="ECO:0007669"/>
    <property type="project" value="TreeGrafter"/>
</dbReference>
<dbReference type="GO" id="GO:0005525">
    <property type="term" value="F:GTP binding"/>
    <property type="evidence" value="ECO:0007669"/>
    <property type="project" value="UniProtKB-KW"/>
</dbReference>
<dbReference type="GO" id="GO:0003924">
    <property type="term" value="F:GTPase activity"/>
    <property type="evidence" value="ECO:0007669"/>
    <property type="project" value="UniProtKB-UniRule"/>
</dbReference>
<dbReference type="GO" id="GO:0097216">
    <property type="term" value="F:guanosine tetraphosphate binding"/>
    <property type="evidence" value="ECO:0007669"/>
    <property type="project" value="UniProtKB-ARBA"/>
</dbReference>
<dbReference type="GO" id="GO:0003743">
    <property type="term" value="F:translation initiation factor activity"/>
    <property type="evidence" value="ECO:0007669"/>
    <property type="project" value="UniProtKB-UniRule"/>
</dbReference>
<dbReference type="CDD" id="cd01887">
    <property type="entry name" value="IF2_eIF5B"/>
    <property type="match status" value="1"/>
</dbReference>
<dbReference type="CDD" id="cd03702">
    <property type="entry name" value="IF2_mtIF2_II"/>
    <property type="match status" value="1"/>
</dbReference>
<dbReference type="CDD" id="cd03692">
    <property type="entry name" value="mtIF2_IVc"/>
    <property type="match status" value="1"/>
</dbReference>
<dbReference type="FunFam" id="2.40.30.10:FF:000007">
    <property type="entry name" value="Translation initiation factor IF-2"/>
    <property type="match status" value="1"/>
</dbReference>
<dbReference type="FunFam" id="2.40.30.10:FF:000008">
    <property type="entry name" value="Translation initiation factor IF-2"/>
    <property type="match status" value="1"/>
</dbReference>
<dbReference type="FunFam" id="3.40.50.10050:FF:000001">
    <property type="entry name" value="Translation initiation factor IF-2"/>
    <property type="match status" value="1"/>
</dbReference>
<dbReference type="FunFam" id="3.40.50.300:FF:000019">
    <property type="entry name" value="Translation initiation factor IF-2"/>
    <property type="match status" value="1"/>
</dbReference>
<dbReference type="Gene3D" id="3.40.50.300">
    <property type="entry name" value="P-loop containing nucleotide triphosphate hydrolases"/>
    <property type="match status" value="1"/>
</dbReference>
<dbReference type="Gene3D" id="3.30.56.50">
    <property type="entry name" value="Putative DNA-binding domain, N-terminal subdomain of bacterial translation initiation factor IF2"/>
    <property type="match status" value="1"/>
</dbReference>
<dbReference type="Gene3D" id="2.40.30.10">
    <property type="entry name" value="Translation factors"/>
    <property type="match status" value="2"/>
</dbReference>
<dbReference type="Gene3D" id="3.40.50.10050">
    <property type="entry name" value="Translation initiation factor IF- 2, domain 3"/>
    <property type="match status" value="1"/>
</dbReference>
<dbReference type="HAMAP" id="MF_00100_B">
    <property type="entry name" value="IF_2_B"/>
    <property type="match status" value="1"/>
</dbReference>
<dbReference type="InterPro" id="IPR009061">
    <property type="entry name" value="DNA-bd_dom_put_sf"/>
</dbReference>
<dbReference type="InterPro" id="IPR053905">
    <property type="entry name" value="EF-G-like_DII"/>
</dbReference>
<dbReference type="InterPro" id="IPR004161">
    <property type="entry name" value="EFTu-like_2"/>
</dbReference>
<dbReference type="InterPro" id="IPR013575">
    <property type="entry name" value="IF2_assoc_dom_bac"/>
</dbReference>
<dbReference type="InterPro" id="IPR044145">
    <property type="entry name" value="IF2_II"/>
</dbReference>
<dbReference type="InterPro" id="IPR006847">
    <property type="entry name" value="IF2_N"/>
</dbReference>
<dbReference type="InterPro" id="IPR027417">
    <property type="entry name" value="P-loop_NTPase"/>
</dbReference>
<dbReference type="InterPro" id="IPR005225">
    <property type="entry name" value="Small_GTP-bd"/>
</dbReference>
<dbReference type="InterPro" id="IPR000795">
    <property type="entry name" value="T_Tr_GTP-bd_dom"/>
</dbReference>
<dbReference type="InterPro" id="IPR000178">
    <property type="entry name" value="TF_IF2_bacterial-like"/>
</dbReference>
<dbReference type="InterPro" id="IPR015760">
    <property type="entry name" value="TIF_IF2"/>
</dbReference>
<dbReference type="InterPro" id="IPR023115">
    <property type="entry name" value="TIF_IF2_dom3"/>
</dbReference>
<dbReference type="InterPro" id="IPR036925">
    <property type="entry name" value="TIF_IF2_dom3_sf"/>
</dbReference>
<dbReference type="InterPro" id="IPR009000">
    <property type="entry name" value="Transl_B-barrel_sf"/>
</dbReference>
<dbReference type="NCBIfam" id="TIGR00487">
    <property type="entry name" value="IF-2"/>
    <property type="match status" value="1"/>
</dbReference>
<dbReference type="NCBIfam" id="TIGR00231">
    <property type="entry name" value="small_GTP"/>
    <property type="match status" value="1"/>
</dbReference>
<dbReference type="PANTHER" id="PTHR43381:SF5">
    <property type="entry name" value="TR-TYPE G DOMAIN-CONTAINING PROTEIN"/>
    <property type="match status" value="1"/>
</dbReference>
<dbReference type="PANTHER" id="PTHR43381">
    <property type="entry name" value="TRANSLATION INITIATION FACTOR IF-2-RELATED"/>
    <property type="match status" value="1"/>
</dbReference>
<dbReference type="Pfam" id="PF22042">
    <property type="entry name" value="EF-G_D2"/>
    <property type="match status" value="1"/>
</dbReference>
<dbReference type="Pfam" id="PF00009">
    <property type="entry name" value="GTP_EFTU"/>
    <property type="match status" value="1"/>
</dbReference>
<dbReference type="Pfam" id="PF03144">
    <property type="entry name" value="GTP_EFTU_D2"/>
    <property type="match status" value="1"/>
</dbReference>
<dbReference type="Pfam" id="PF11987">
    <property type="entry name" value="IF-2"/>
    <property type="match status" value="1"/>
</dbReference>
<dbReference type="Pfam" id="PF08364">
    <property type="entry name" value="IF2_assoc"/>
    <property type="match status" value="1"/>
</dbReference>
<dbReference type="Pfam" id="PF04760">
    <property type="entry name" value="IF2_N"/>
    <property type="match status" value="2"/>
</dbReference>
<dbReference type="SUPFAM" id="SSF52156">
    <property type="entry name" value="Initiation factor IF2/eIF5b, domain 3"/>
    <property type="match status" value="1"/>
</dbReference>
<dbReference type="SUPFAM" id="SSF52540">
    <property type="entry name" value="P-loop containing nucleoside triphosphate hydrolases"/>
    <property type="match status" value="1"/>
</dbReference>
<dbReference type="SUPFAM" id="SSF46955">
    <property type="entry name" value="Putative DNA-binding domain"/>
    <property type="match status" value="1"/>
</dbReference>
<dbReference type="SUPFAM" id="SSF50447">
    <property type="entry name" value="Translation proteins"/>
    <property type="match status" value="2"/>
</dbReference>
<dbReference type="PROSITE" id="PS51722">
    <property type="entry name" value="G_TR_2"/>
    <property type="match status" value="1"/>
</dbReference>
<dbReference type="PROSITE" id="PS01176">
    <property type="entry name" value="IF2"/>
    <property type="match status" value="1"/>
</dbReference>
<reference key="1">
    <citation type="journal article" date="2009" name="Environ. Microbiol.">
        <title>The genome of Polaromonas naphthalenivorans strain CJ2, isolated from coal tar-contaminated sediment, reveals physiological and metabolic versatility and evolution through extensive horizontal gene transfer.</title>
        <authorList>
            <person name="Yagi J.M."/>
            <person name="Sims D."/>
            <person name="Brettin T."/>
            <person name="Bruce D."/>
            <person name="Madsen E.L."/>
        </authorList>
    </citation>
    <scope>NUCLEOTIDE SEQUENCE [LARGE SCALE GENOMIC DNA]</scope>
    <source>
        <strain>CJ2</strain>
    </source>
</reference>
<accession>A1VNU2</accession>
<name>IF2_POLNA</name>
<feature type="chain" id="PRO_0000335497" description="Translation initiation factor IF-2">
    <location>
        <begin position="1"/>
        <end position="992"/>
    </location>
</feature>
<feature type="domain" description="tr-type G">
    <location>
        <begin position="492"/>
        <end position="661"/>
    </location>
</feature>
<feature type="region of interest" description="Disordered" evidence="3">
    <location>
        <begin position="154"/>
        <end position="173"/>
    </location>
</feature>
<feature type="region of interest" description="Disordered" evidence="3">
    <location>
        <begin position="338"/>
        <end position="399"/>
    </location>
</feature>
<feature type="region of interest" description="G1" evidence="1">
    <location>
        <begin position="501"/>
        <end position="508"/>
    </location>
</feature>
<feature type="region of interest" description="G2" evidence="1">
    <location>
        <begin position="526"/>
        <end position="530"/>
    </location>
</feature>
<feature type="region of interest" description="G3" evidence="1">
    <location>
        <begin position="547"/>
        <end position="550"/>
    </location>
</feature>
<feature type="region of interest" description="G4" evidence="1">
    <location>
        <begin position="601"/>
        <end position="604"/>
    </location>
</feature>
<feature type="region of interest" description="G5" evidence="1">
    <location>
        <begin position="637"/>
        <end position="639"/>
    </location>
</feature>
<feature type="binding site" evidence="2">
    <location>
        <begin position="501"/>
        <end position="508"/>
    </location>
    <ligand>
        <name>GTP</name>
        <dbReference type="ChEBI" id="CHEBI:37565"/>
    </ligand>
</feature>
<feature type="binding site" evidence="2">
    <location>
        <begin position="547"/>
        <end position="551"/>
    </location>
    <ligand>
        <name>GTP</name>
        <dbReference type="ChEBI" id="CHEBI:37565"/>
    </ligand>
</feature>
<feature type="binding site" evidence="2">
    <location>
        <begin position="601"/>
        <end position="604"/>
    </location>
    <ligand>
        <name>GTP</name>
        <dbReference type="ChEBI" id="CHEBI:37565"/>
    </ligand>
</feature>
<protein>
    <recommendedName>
        <fullName evidence="2">Translation initiation factor IF-2</fullName>
    </recommendedName>
</protein>
<gene>
    <name evidence="2" type="primary">infB</name>
    <name type="ordered locus">Pnap_2011</name>
</gene>
<comment type="function">
    <text evidence="2">One of the essential components for the initiation of protein synthesis. Protects formylmethionyl-tRNA from spontaneous hydrolysis and promotes its binding to the 30S ribosomal subunits. Also involved in the hydrolysis of GTP during the formation of the 70S ribosomal complex.</text>
</comment>
<comment type="subcellular location">
    <subcellularLocation>
        <location evidence="2">Cytoplasm</location>
    </subcellularLocation>
</comment>
<comment type="similarity">
    <text evidence="2">Belongs to the TRAFAC class translation factor GTPase superfamily. Classic translation factor GTPase family. IF-2 subfamily.</text>
</comment>
<evidence type="ECO:0000250" key="1"/>
<evidence type="ECO:0000255" key="2">
    <source>
        <dbReference type="HAMAP-Rule" id="MF_00100"/>
    </source>
</evidence>
<evidence type="ECO:0000256" key="3">
    <source>
        <dbReference type="SAM" id="MobiDB-lite"/>
    </source>
</evidence>
<proteinExistence type="inferred from homology"/>